<protein>
    <recommendedName>
        <fullName evidence="1">Protein-L-isoaspartate O-methyltransferase</fullName>
        <ecNumber evidence="1">2.1.1.77</ecNumber>
    </recommendedName>
    <alternativeName>
        <fullName evidence="1">L-isoaspartyl protein carboxyl methyltransferase</fullName>
    </alternativeName>
    <alternativeName>
        <fullName evidence="1">Protein L-isoaspartyl methyltransferase</fullName>
    </alternativeName>
    <alternativeName>
        <fullName evidence="1">Protein-beta-aspartate methyltransferase</fullName>
        <shortName evidence="1">PIMT</shortName>
    </alternativeName>
</protein>
<comment type="function">
    <text evidence="1">Catalyzes the methyl esterification of L-isoaspartyl residues in peptides and proteins that result from spontaneous decomposition of normal L-aspartyl and L-asparaginyl residues. It plays a role in the repair and/or degradation of damaged proteins.</text>
</comment>
<comment type="catalytic activity">
    <reaction evidence="1">
        <text>[protein]-L-isoaspartate + S-adenosyl-L-methionine = [protein]-L-isoaspartate alpha-methyl ester + S-adenosyl-L-homocysteine</text>
        <dbReference type="Rhea" id="RHEA:12705"/>
        <dbReference type="Rhea" id="RHEA-COMP:12143"/>
        <dbReference type="Rhea" id="RHEA-COMP:12144"/>
        <dbReference type="ChEBI" id="CHEBI:57856"/>
        <dbReference type="ChEBI" id="CHEBI:59789"/>
        <dbReference type="ChEBI" id="CHEBI:90596"/>
        <dbReference type="ChEBI" id="CHEBI:90598"/>
        <dbReference type="EC" id="2.1.1.77"/>
    </reaction>
</comment>
<comment type="subcellular location">
    <subcellularLocation>
        <location evidence="1">Cytoplasm</location>
    </subcellularLocation>
</comment>
<comment type="similarity">
    <text evidence="1">Belongs to the methyltransferase superfamily. L-isoaspartyl/D-aspartyl protein methyltransferase family.</text>
</comment>
<organism>
    <name type="scientific">Yersinia pseudotuberculosis serotype IB (strain PB1/+)</name>
    <dbReference type="NCBI Taxonomy" id="502801"/>
    <lineage>
        <taxon>Bacteria</taxon>
        <taxon>Pseudomonadati</taxon>
        <taxon>Pseudomonadota</taxon>
        <taxon>Gammaproteobacteria</taxon>
        <taxon>Enterobacterales</taxon>
        <taxon>Yersiniaceae</taxon>
        <taxon>Yersinia</taxon>
    </lineage>
</organism>
<feature type="chain" id="PRO_0000351963" description="Protein-L-isoaspartate O-methyltransferase">
    <location>
        <begin position="1"/>
        <end position="208"/>
    </location>
</feature>
<feature type="active site" evidence="1">
    <location>
        <position position="59"/>
    </location>
</feature>
<dbReference type="EC" id="2.1.1.77" evidence="1"/>
<dbReference type="EMBL" id="CP001048">
    <property type="protein sequence ID" value="ACC87792.1"/>
    <property type="molecule type" value="Genomic_DNA"/>
</dbReference>
<dbReference type="RefSeq" id="WP_002209395.1">
    <property type="nucleotide sequence ID" value="NZ_CP009780.1"/>
</dbReference>
<dbReference type="SMR" id="B2K581"/>
<dbReference type="KEGG" id="ypb:YPTS_0808"/>
<dbReference type="PATRIC" id="fig|502801.10.peg.139"/>
<dbReference type="GO" id="GO:0005737">
    <property type="term" value="C:cytoplasm"/>
    <property type="evidence" value="ECO:0007669"/>
    <property type="project" value="UniProtKB-SubCell"/>
</dbReference>
<dbReference type="GO" id="GO:0004719">
    <property type="term" value="F:protein-L-isoaspartate (D-aspartate) O-methyltransferase activity"/>
    <property type="evidence" value="ECO:0007669"/>
    <property type="project" value="UniProtKB-UniRule"/>
</dbReference>
<dbReference type="GO" id="GO:0032259">
    <property type="term" value="P:methylation"/>
    <property type="evidence" value="ECO:0007669"/>
    <property type="project" value="UniProtKB-KW"/>
</dbReference>
<dbReference type="GO" id="GO:0036211">
    <property type="term" value="P:protein modification process"/>
    <property type="evidence" value="ECO:0007669"/>
    <property type="project" value="UniProtKB-UniRule"/>
</dbReference>
<dbReference type="GO" id="GO:0030091">
    <property type="term" value="P:protein repair"/>
    <property type="evidence" value="ECO:0007669"/>
    <property type="project" value="UniProtKB-UniRule"/>
</dbReference>
<dbReference type="CDD" id="cd02440">
    <property type="entry name" value="AdoMet_MTases"/>
    <property type="match status" value="1"/>
</dbReference>
<dbReference type="FunFam" id="3.40.50.150:FF:000010">
    <property type="entry name" value="Protein-L-isoaspartate O-methyltransferase"/>
    <property type="match status" value="1"/>
</dbReference>
<dbReference type="Gene3D" id="3.40.50.150">
    <property type="entry name" value="Vaccinia Virus protein VP39"/>
    <property type="match status" value="1"/>
</dbReference>
<dbReference type="HAMAP" id="MF_00090">
    <property type="entry name" value="PIMT"/>
    <property type="match status" value="1"/>
</dbReference>
<dbReference type="InterPro" id="IPR000682">
    <property type="entry name" value="PCMT"/>
</dbReference>
<dbReference type="InterPro" id="IPR029063">
    <property type="entry name" value="SAM-dependent_MTases_sf"/>
</dbReference>
<dbReference type="NCBIfam" id="TIGR00080">
    <property type="entry name" value="pimt"/>
    <property type="match status" value="1"/>
</dbReference>
<dbReference type="NCBIfam" id="NF001453">
    <property type="entry name" value="PRK00312.1"/>
    <property type="match status" value="1"/>
</dbReference>
<dbReference type="PANTHER" id="PTHR11579">
    <property type="entry name" value="PROTEIN-L-ISOASPARTATE O-METHYLTRANSFERASE"/>
    <property type="match status" value="1"/>
</dbReference>
<dbReference type="PANTHER" id="PTHR11579:SF0">
    <property type="entry name" value="PROTEIN-L-ISOASPARTATE(D-ASPARTATE) O-METHYLTRANSFERASE"/>
    <property type="match status" value="1"/>
</dbReference>
<dbReference type="Pfam" id="PF01135">
    <property type="entry name" value="PCMT"/>
    <property type="match status" value="1"/>
</dbReference>
<dbReference type="SUPFAM" id="SSF53335">
    <property type="entry name" value="S-adenosyl-L-methionine-dependent methyltransferases"/>
    <property type="match status" value="1"/>
</dbReference>
<dbReference type="PROSITE" id="PS01279">
    <property type="entry name" value="PCMT"/>
    <property type="match status" value="1"/>
</dbReference>
<proteinExistence type="inferred from homology"/>
<accession>B2K581</accession>
<sequence length="208" mass="23432">MVNKRMQTLLMQLRQQGIHDERLLQAIEAVPRERFVDEALAHKAYENTALPIGAGQTISQPYMVARMTELLQLTPTSRVLEIGTGSGYQTAILAHLVDHVCSVERIKGLQWQAKRRLKQLDLHNVSTRHGDGWLGWQSRGPFDAIIVTAAPPEIPDALLEQLDEGGILVLPVGEQFQTLKYVQRRNNEYHIETVEAVRFVPLVKGELA</sequence>
<gene>
    <name evidence="1" type="primary">pcm</name>
    <name type="ordered locus">YPTS_0808</name>
</gene>
<evidence type="ECO:0000255" key="1">
    <source>
        <dbReference type="HAMAP-Rule" id="MF_00090"/>
    </source>
</evidence>
<name>PIMT_YERPB</name>
<reference key="1">
    <citation type="submission" date="2008-04" db="EMBL/GenBank/DDBJ databases">
        <title>Complete sequence of Yersinia pseudotuberculosis PB1/+.</title>
        <authorList>
            <person name="Copeland A."/>
            <person name="Lucas S."/>
            <person name="Lapidus A."/>
            <person name="Glavina del Rio T."/>
            <person name="Dalin E."/>
            <person name="Tice H."/>
            <person name="Bruce D."/>
            <person name="Goodwin L."/>
            <person name="Pitluck S."/>
            <person name="Munk A.C."/>
            <person name="Brettin T."/>
            <person name="Detter J.C."/>
            <person name="Han C."/>
            <person name="Tapia R."/>
            <person name="Schmutz J."/>
            <person name="Larimer F."/>
            <person name="Land M."/>
            <person name="Hauser L."/>
            <person name="Challacombe J.F."/>
            <person name="Green L."/>
            <person name="Lindler L.E."/>
            <person name="Nikolich M.P."/>
            <person name="Richardson P."/>
        </authorList>
    </citation>
    <scope>NUCLEOTIDE SEQUENCE [LARGE SCALE GENOMIC DNA]</scope>
    <source>
        <strain>PB1/+</strain>
    </source>
</reference>
<keyword id="KW-0963">Cytoplasm</keyword>
<keyword id="KW-0489">Methyltransferase</keyword>
<keyword id="KW-0949">S-adenosyl-L-methionine</keyword>
<keyword id="KW-0808">Transferase</keyword>